<organism>
    <name type="scientific">Saccharomyces cerevisiae (strain ATCC 204508 / S288c)</name>
    <name type="common">Baker's yeast</name>
    <dbReference type="NCBI Taxonomy" id="559292"/>
    <lineage>
        <taxon>Eukaryota</taxon>
        <taxon>Fungi</taxon>
        <taxon>Dikarya</taxon>
        <taxon>Ascomycota</taxon>
        <taxon>Saccharomycotina</taxon>
        <taxon>Saccharomycetes</taxon>
        <taxon>Saccharomycetales</taxon>
        <taxon>Saccharomycetaceae</taxon>
        <taxon>Saccharomyces</taxon>
    </lineage>
</organism>
<protein>
    <recommendedName>
        <fullName>Phosphate permease PHO89</fullName>
    </recommendedName>
    <alternativeName>
        <fullName>Na(+)/Pi cotransporter PHO89</fullName>
    </alternativeName>
</protein>
<sequence length="574" mass="62654">MALHQFDYIFAIAMLFAFLDAFNIGANDVANSFASSISSRSLKYWQAMVLAGLCEFLGAVLAGARVSGTIKNNIIDSSIFTNDPAVLMLTMTSALIGSSCWLTFATAIGMPVSTTHSIVGGTIGAGIAAGGANGVVWGWSGVSQIIASWFIAPILAGAIAAIVFSISRFSVLEVKSLERSIKNALLLVGVLVFATFSILTMLIVWKGSPNLHLDDLSETETAVSIVLTGAIASIVYFIFFYPFYRRKVLDQDWTLKLIDIFRGPSFYFKSTDDIPPMPEGHQLTIDYYEGRRNLGTTVSVEDEENKAASNSNDSVKNKEDIQEVDLVRTETEPETKLSTKQYWWSLLKQGPKKWPLLFWLVISHGWTQDVIHAQVNDRDMLSGDLKGMYERSKFYDNRVEYIYSVLQAITAATMSFAHGANDVANATGPLSAVYVIWKTNTIGAKSEVPVWVLAYGGVALVIGCWTYGYNIIKNLGNKMILQSPSRGFSIELAVAITTVMATQLGIPTSTTQIAVGGIVAVGLCNKDLKSVNWRMVAWCYSGWFLTLPIAGLIAGIINGIILNAPRFGVEYQMT</sequence>
<feature type="chain" id="PRO_0000080781" description="Phosphate permease PHO89">
    <location>
        <begin position="1"/>
        <end position="574"/>
    </location>
</feature>
<feature type="topological domain" description="Extracellular" evidence="8">
    <location>
        <begin position="1"/>
        <end position="5"/>
    </location>
</feature>
<feature type="transmembrane region" description="Helical" evidence="1">
    <location>
        <begin position="6"/>
        <end position="26"/>
    </location>
</feature>
<feature type="topological domain" description="Cytoplasmic" evidence="8">
    <location>
        <begin position="27"/>
        <end position="43"/>
    </location>
</feature>
<feature type="transmembrane region" description="Helical" evidence="1">
    <location>
        <begin position="44"/>
        <end position="64"/>
    </location>
</feature>
<feature type="topological domain" description="Extracellular" evidence="8">
    <location>
        <begin position="65"/>
        <end position="84"/>
    </location>
</feature>
<feature type="transmembrane region" description="Helical" evidence="1">
    <location>
        <begin position="85"/>
        <end position="105"/>
    </location>
</feature>
<feature type="topological domain" description="Cytoplasmic" evidence="8">
    <location>
        <begin position="106"/>
        <end position="117"/>
    </location>
</feature>
<feature type="transmembrane region" description="Helical" evidence="1">
    <location>
        <begin position="118"/>
        <end position="138"/>
    </location>
</feature>
<feature type="topological domain" description="Extracellular" evidence="8">
    <location>
        <begin position="139"/>
        <end position="145"/>
    </location>
</feature>
<feature type="transmembrane region" description="Helical" evidence="1">
    <location>
        <begin position="146"/>
        <end position="166"/>
    </location>
</feature>
<feature type="topological domain" description="Cytoplasmic" evidence="8">
    <location>
        <begin position="167"/>
        <end position="184"/>
    </location>
</feature>
<feature type="transmembrane region" description="Helical" evidence="1">
    <location>
        <begin position="185"/>
        <end position="205"/>
    </location>
</feature>
<feature type="topological domain" description="Extracellular" evidence="8">
    <location>
        <begin position="206"/>
        <end position="222"/>
    </location>
</feature>
<feature type="transmembrane region" description="Helical" evidence="1">
    <location>
        <begin position="223"/>
        <end position="243"/>
    </location>
</feature>
<feature type="topological domain" description="Cytoplasmic" evidence="8">
    <location>
        <begin position="244"/>
        <end position="354"/>
    </location>
</feature>
<feature type="transmembrane region" description="Helical" evidence="1">
    <location>
        <begin position="355"/>
        <end position="375"/>
    </location>
</feature>
<feature type="topological domain" description="Extracellular" evidence="8">
    <location>
        <begin position="376"/>
        <end position="398"/>
    </location>
</feature>
<feature type="transmembrane region" description="Helical" evidence="1">
    <location>
        <begin position="399"/>
        <end position="419"/>
    </location>
</feature>
<feature type="topological domain" description="Cytoplasmic" evidence="8">
    <location>
        <begin position="420"/>
        <end position="447"/>
    </location>
</feature>
<feature type="transmembrane region" description="Helical" evidence="1">
    <location>
        <begin position="448"/>
        <end position="468"/>
    </location>
</feature>
<feature type="topological domain" description="Extracellular" evidence="8">
    <location>
        <begin position="469"/>
        <end position="503"/>
    </location>
</feature>
<feature type="transmembrane region" description="Helical" evidence="1">
    <location>
        <begin position="504"/>
        <end position="524"/>
    </location>
</feature>
<feature type="topological domain" description="Cytoplasmic" evidence="8">
    <location>
        <begin position="525"/>
        <end position="541"/>
    </location>
</feature>
<feature type="transmembrane region" description="Helical" evidence="1">
    <location>
        <begin position="542"/>
        <end position="562"/>
    </location>
</feature>
<feature type="topological domain" description="Extracellular" evidence="8">
    <location>
        <begin position="563"/>
        <end position="574"/>
    </location>
</feature>
<feature type="region of interest" description="Disordered" evidence="2">
    <location>
        <begin position="301"/>
        <end position="332"/>
    </location>
</feature>
<feature type="compositionally biased region" description="Basic and acidic residues" evidence="2">
    <location>
        <begin position="315"/>
        <end position="332"/>
    </location>
</feature>
<accession>P38361</accession>
<accession>D6VQU0</accession>
<keyword id="KW-1003">Cell membrane</keyword>
<keyword id="KW-0472">Membrane</keyword>
<keyword id="KW-0592">Phosphate transport</keyword>
<keyword id="KW-1185">Reference proteome</keyword>
<keyword id="KW-0769">Symport</keyword>
<keyword id="KW-0812">Transmembrane</keyword>
<keyword id="KW-1133">Transmembrane helix</keyword>
<keyword id="KW-0813">Transport</keyword>
<reference key="1">
    <citation type="journal article" date="1994" name="EMBO J.">
        <title>Complete DNA sequence of yeast chromosome II.</title>
        <authorList>
            <person name="Feldmann H."/>
            <person name="Aigle M."/>
            <person name="Aljinovic G."/>
            <person name="Andre B."/>
            <person name="Baclet M.C."/>
            <person name="Barthe C."/>
            <person name="Baur A."/>
            <person name="Becam A.-M."/>
            <person name="Biteau N."/>
            <person name="Boles E."/>
            <person name="Brandt T."/>
            <person name="Brendel M."/>
            <person name="Brueckner M."/>
            <person name="Bussereau F."/>
            <person name="Christiansen C."/>
            <person name="Contreras R."/>
            <person name="Crouzet M."/>
            <person name="Cziepluch C."/>
            <person name="Demolis N."/>
            <person name="Delaveau T."/>
            <person name="Doignon F."/>
            <person name="Domdey H."/>
            <person name="Duesterhus S."/>
            <person name="Dubois E."/>
            <person name="Dujon B."/>
            <person name="El Bakkoury M."/>
            <person name="Entian K.-D."/>
            <person name="Feuermann M."/>
            <person name="Fiers W."/>
            <person name="Fobo G.M."/>
            <person name="Fritz C."/>
            <person name="Gassenhuber J."/>
            <person name="Glansdorff N."/>
            <person name="Goffeau A."/>
            <person name="Grivell L.A."/>
            <person name="de Haan M."/>
            <person name="Hein C."/>
            <person name="Herbert C.J."/>
            <person name="Hollenberg C.P."/>
            <person name="Holmstroem K."/>
            <person name="Jacq C."/>
            <person name="Jacquet M."/>
            <person name="Jauniaux J.-C."/>
            <person name="Jonniaux J.-L."/>
            <person name="Kallesoee T."/>
            <person name="Kiesau P."/>
            <person name="Kirchrath L."/>
            <person name="Koetter P."/>
            <person name="Korol S."/>
            <person name="Liebl S."/>
            <person name="Logghe M."/>
            <person name="Lohan A.J.E."/>
            <person name="Louis E.J."/>
            <person name="Li Z.Y."/>
            <person name="Maat M.J."/>
            <person name="Mallet L."/>
            <person name="Mannhaupt G."/>
            <person name="Messenguy F."/>
            <person name="Miosga T."/>
            <person name="Molemans F."/>
            <person name="Mueller S."/>
            <person name="Nasr F."/>
            <person name="Obermaier B."/>
            <person name="Perea J."/>
            <person name="Pierard A."/>
            <person name="Piravandi E."/>
            <person name="Pohl F.M."/>
            <person name="Pohl T.M."/>
            <person name="Potier S."/>
            <person name="Proft M."/>
            <person name="Purnelle B."/>
            <person name="Ramezani Rad M."/>
            <person name="Rieger M."/>
            <person name="Rose M."/>
            <person name="Schaaff-Gerstenschlaeger I."/>
            <person name="Scherens B."/>
            <person name="Schwarzlose C."/>
            <person name="Skala J."/>
            <person name="Slonimski P.P."/>
            <person name="Smits P.H.M."/>
            <person name="Souciet J.-L."/>
            <person name="Steensma H.Y."/>
            <person name="Stucka R."/>
            <person name="Urrestarazu L.A."/>
            <person name="van der Aart Q.J.M."/>
            <person name="Van Dyck L."/>
            <person name="Vassarotti A."/>
            <person name="Vetter I."/>
            <person name="Vierendeels F."/>
            <person name="Vissers S."/>
            <person name="Wagner G."/>
            <person name="de Wergifosse P."/>
            <person name="Wolfe K.H."/>
            <person name="Zagulski M."/>
            <person name="Zimmermann F.K."/>
            <person name="Mewes H.-W."/>
            <person name="Kleine K."/>
        </authorList>
    </citation>
    <scope>NUCLEOTIDE SEQUENCE [LARGE SCALE GENOMIC DNA]</scope>
    <source>
        <strain>ATCC 204508 / S288c</strain>
    </source>
</reference>
<reference key="2">
    <citation type="journal article" date="2014" name="G3 (Bethesda)">
        <title>The reference genome sequence of Saccharomyces cerevisiae: Then and now.</title>
        <authorList>
            <person name="Engel S.R."/>
            <person name="Dietrich F.S."/>
            <person name="Fisk D.G."/>
            <person name="Binkley G."/>
            <person name="Balakrishnan R."/>
            <person name="Costanzo M.C."/>
            <person name="Dwight S.S."/>
            <person name="Hitz B.C."/>
            <person name="Karra K."/>
            <person name="Nash R.S."/>
            <person name="Weng S."/>
            <person name="Wong E.D."/>
            <person name="Lloyd P."/>
            <person name="Skrzypek M.S."/>
            <person name="Miyasato S.R."/>
            <person name="Simison M."/>
            <person name="Cherry J.M."/>
        </authorList>
    </citation>
    <scope>GENOME REANNOTATION</scope>
    <source>
        <strain>ATCC 204508 / S288c</strain>
    </source>
</reference>
<reference key="3">
    <citation type="journal article" date="1998" name="Mol. Gen. Genet.">
        <title>Identification, cloning and characterization of a derepressible Na+-coupled phosphate transporter in Saccharomyces cerevisiae.</title>
        <authorList>
            <person name="Martinez P."/>
            <person name="Persson B.L."/>
        </authorList>
    </citation>
    <scope>FUNCTION</scope>
    <scope>TRANSPORTER ACTIVITY</scope>
    <scope>ACTIVITY REGULATION</scope>
    <scope>BIOPHYSICOCHEMICAL PROPERTIES</scope>
    <scope>INDUCTION</scope>
    <scope>DISRUPTION PHENOTYPE</scope>
</reference>
<reference key="4">
    <citation type="journal article" date="2003" name="J. Biol. Chem.">
        <title>The Saccharomyces cerevisiae high affinity phosphate transporter encoded by PHO84 also functions in manganese homeostasis.</title>
        <authorList>
            <person name="Jensen L.T."/>
            <person name="Ajua-Alemanji M."/>
            <person name="Culotta V.C."/>
        </authorList>
    </citation>
    <scope>DISRUPTION PHENOTYPE</scope>
</reference>
<reference key="5">
    <citation type="journal article" date="2003" name="Mol. Microbiol.">
        <title>Inorganic phosphate is sensed by specific phosphate carriers and acts in concert with glucose as a nutrient signal for activation of the protein kinase A pathway in the yeast Saccharomyces cerevisiae.</title>
        <authorList>
            <person name="Giots F."/>
            <person name="Donaton M.C."/>
            <person name="Thevelein J.M."/>
        </authorList>
    </citation>
    <scope>FUNCTION</scope>
    <scope>DISRUPTION PHENOTYPE</scope>
</reference>
<reference key="6">
    <citation type="journal article" date="2007" name="J. Proteome Res.">
        <title>Large-scale phosphorylation analysis of alpha-factor-arrested Saccharomyces cerevisiae.</title>
        <authorList>
            <person name="Li X."/>
            <person name="Gerber S.A."/>
            <person name="Rudner A.D."/>
            <person name="Beausoleil S.A."/>
            <person name="Haas W."/>
            <person name="Villen J."/>
            <person name="Elias J.E."/>
            <person name="Gygi S.P."/>
        </authorList>
    </citation>
    <scope>IDENTIFICATION BY MASS SPECTROMETRY [LARGE SCALE ANALYSIS]</scope>
    <source>
        <strain>ADR376</strain>
    </source>
</reference>
<reference key="7">
    <citation type="journal article" date="2009" name="Science">
        <title>Global analysis of Cdk1 substrate phosphorylation sites provides insights into evolution.</title>
        <authorList>
            <person name="Holt L.J."/>
            <person name="Tuch B.B."/>
            <person name="Villen J."/>
            <person name="Johnson A.D."/>
            <person name="Gygi S.P."/>
            <person name="Morgan D.O."/>
        </authorList>
    </citation>
    <scope>IDENTIFICATION BY MASS SPECTROMETRY [LARGE SCALE ANALYSIS]</scope>
</reference>
<reference key="8">
    <citation type="journal article" date="2013" name="Biochem. Biophys. Res. Commun.">
        <title>Characterization of the biochemical and biophysical properties of the Saccharomyces cerevisiae phosphate transporter Pho89.</title>
        <authorList>
            <person name="Sengottaiyan P."/>
            <person name="Petrlova J."/>
            <person name="Lagerstedt J.O."/>
            <person name="Ruiz-Pavon L."/>
            <person name="Budamagunta M.S."/>
            <person name="Voss J.C."/>
            <person name="Persson B.L."/>
        </authorList>
    </citation>
    <scope>FUNCTION</scope>
    <scope>TRANSPORTER ACTIVITY</scope>
    <scope>ACTIVITY REGULATION</scope>
    <scope>SUBUNIT</scope>
</reference>
<reference key="9">
    <citation type="journal article" date="2013" name="FEBS J.">
        <title>Functional expression, purification and reconstitution of the recombinant phosphate transporter Pho89 of Saccharomyces cerevisiae.</title>
        <authorList>
            <person name="Sengottaiyan P."/>
            <person name="Ruiz-Pavon L."/>
            <person name="Persson B.L."/>
        </authorList>
    </citation>
    <scope>FUNCTION</scope>
    <scope>TRANSPORTER ACTIVITY</scope>
    <scope>ACTIVITY REGULATION</scope>
    <scope>BIOPHYSICOCHEMICAL PROPERTIES</scope>
    <scope>SUBUNIT</scope>
</reference>
<name>PHO89_YEAST</name>
<evidence type="ECO:0000255" key="1"/>
<evidence type="ECO:0000256" key="2">
    <source>
        <dbReference type="SAM" id="MobiDB-lite"/>
    </source>
</evidence>
<evidence type="ECO:0000269" key="3">
    <source>
    </source>
</evidence>
<evidence type="ECO:0000269" key="4">
    <source>
    </source>
</evidence>
<evidence type="ECO:0000269" key="5">
    <source>
    </source>
</evidence>
<evidence type="ECO:0000269" key="6">
    <source>
    </source>
</evidence>
<evidence type="ECO:0000269" key="7">
    <source>
    </source>
</evidence>
<evidence type="ECO:0000305" key="8"/>
<comment type="function">
    <text evidence="3 5 6 7">Sodium-phosphate symporter (PubMed:12581367, PubMed:23216645, PubMed:23770362, PubMed:9671031). Active in early growth phase.</text>
</comment>
<comment type="catalytic activity">
    <reaction evidence="5 6 7">
        <text>2 Na(+)(out) + phosphate(out) = 2 Na(+)(in) + phosphate(in)</text>
        <dbReference type="Rhea" id="RHEA:71259"/>
        <dbReference type="ChEBI" id="CHEBI:29101"/>
        <dbReference type="ChEBI" id="CHEBI:43474"/>
    </reaction>
    <physiologicalReaction direction="left-to-right" evidence="8">
        <dbReference type="Rhea" id="RHEA:71260"/>
    </physiologicalReaction>
</comment>
<comment type="activity regulation">
    <text evidence="5 6 7">Weakly stimulated by Li(+) and K(+) (PubMed:23770362, PubMed:9671031). Inhibited by monensin (PubMed:23216645). Inhibited by phosphonoacetic acid (PubMed:23770362). Inhibited by methylphosphonate (PubMed:23770362). Inhibited by dimethylphosphonate (PubMed:23770362).</text>
</comment>
<comment type="biophysicochemical properties">
    <kinetics>
        <KM evidence="7">0.5 uM for phosphate</KM>
        <KM evidence="5">64.1 uM for phosphate (in the presence of 50 mM NaCl)</KM>
        <Vmax evidence="5">4.1 umol/min/mg enzyme (in the presence of 50 mM NaCl)</Vmax>
    </kinetics>
    <phDependence>
        <text evidence="7">Optimum pH is 9.5.</text>
    </phDependence>
</comment>
<comment type="subunit">
    <text evidence="5 6">Forms homodimers and higher order homooligomers.</text>
</comment>
<comment type="interaction">
    <interactant intactId="EBI-21068">
        <id>P38361</id>
    </interactant>
    <interactant intactId="EBI-21068">
        <id>P38361</id>
        <label>PHO89</label>
    </interactant>
    <organismsDiffer>false</organismsDiffer>
    <experiments>4</experiments>
</comment>
<comment type="subcellular location">
    <subcellularLocation>
        <location evidence="8">Cell membrane</location>
        <topology evidence="1">Multi-pass membrane protein</topology>
    </subcellularLocation>
</comment>
<comment type="induction">
    <text evidence="7">Transcribed under conditions of phosphate limitation.</text>
</comment>
<comment type="disruption phenotype">
    <text evidence="3 4 7">No significant effect on growth rates (PubMed:12923174, PubMed:9671031). Reduced phosphate uptake capacity in phosphate-starved cells (PubMed:12581367).</text>
</comment>
<comment type="similarity">
    <text evidence="8">Belongs to the inorganic phosphate transporter (PiT) (TC 2.A.20) family.</text>
</comment>
<dbReference type="EMBL" id="Z36165">
    <property type="protein sequence ID" value="CAA85261.1"/>
    <property type="molecule type" value="Genomic_DNA"/>
</dbReference>
<dbReference type="EMBL" id="BK006936">
    <property type="protein sequence ID" value="DAA07410.1"/>
    <property type="molecule type" value="Genomic_DNA"/>
</dbReference>
<dbReference type="PIR" id="S46178">
    <property type="entry name" value="S46178"/>
</dbReference>
<dbReference type="RefSeq" id="NP_009855.1">
    <property type="nucleotide sequence ID" value="NM_001178644.1"/>
</dbReference>
<dbReference type="SMR" id="P38361"/>
<dbReference type="BioGRID" id="32989">
    <property type="interactions" value="64"/>
</dbReference>
<dbReference type="DIP" id="DIP-4966N"/>
<dbReference type="FunCoup" id="P38361">
    <property type="interactions" value="1278"/>
</dbReference>
<dbReference type="IntAct" id="P38361">
    <property type="interactions" value="6"/>
</dbReference>
<dbReference type="MINT" id="P38361"/>
<dbReference type="STRING" id="4932.YBR296C"/>
<dbReference type="TCDB" id="2.A.20.2.2">
    <property type="family name" value="the inorganic phosphate transporter (pit) family"/>
</dbReference>
<dbReference type="iPTMnet" id="P38361"/>
<dbReference type="PaxDb" id="4932-YBR296C"/>
<dbReference type="PeptideAtlas" id="P38361"/>
<dbReference type="EnsemblFungi" id="YBR296C_mRNA">
    <property type="protein sequence ID" value="YBR296C"/>
    <property type="gene ID" value="YBR296C"/>
</dbReference>
<dbReference type="GeneID" id="852599"/>
<dbReference type="KEGG" id="sce:YBR296C"/>
<dbReference type="AGR" id="SGD:S000000500"/>
<dbReference type="SGD" id="S000000500">
    <property type="gene designation" value="PHO89"/>
</dbReference>
<dbReference type="VEuPathDB" id="FungiDB:YBR296C"/>
<dbReference type="eggNOG" id="KOG2493">
    <property type="taxonomic scope" value="Eukaryota"/>
</dbReference>
<dbReference type="GeneTree" id="ENSGT00390000014879"/>
<dbReference type="HOGENOM" id="CLU_015355_3_0_1"/>
<dbReference type="InParanoid" id="P38361"/>
<dbReference type="OMA" id="ATIYAIW"/>
<dbReference type="OrthoDB" id="260807at2759"/>
<dbReference type="BioCyc" id="YEAST:G3O-29214-MONOMER"/>
<dbReference type="Reactome" id="R-SCE-427652">
    <property type="pathway name" value="Sodium-coupled phosphate cotransporters"/>
</dbReference>
<dbReference type="BioGRID-ORCS" id="852599">
    <property type="hits" value="3 hits in 10 CRISPR screens"/>
</dbReference>
<dbReference type="PRO" id="PR:P38361"/>
<dbReference type="Proteomes" id="UP000002311">
    <property type="component" value="Chromosome II"/>
</dbReference>
<dbReference type="RNAct" id="P38361">
    <property type="molecule type" value="protein"/>
</dbReference>
<dbReference type="GO" id="GO:0005783">
    <property type="term" value="C:endoplasmic reticulum"/>
    <property type="evidence" value="ECO:0007005"/>
    <property type="project" value="SGD"/>
</dbReference>
<dbReference type="GO" id="GO:0005886">
    <property type="term" value="C:plasma membrane"/>
    <property type="evidence" value="ECO:0000315"/>
    <property type="project" value="SGD"/>
</dbReference>
<dbReference type="GO" id="GO:0042802">
    <property type="term" value="F:identical protein binding"/>
    <property type="evidence" value="ECO:0000353"/>
    <property type="project" value="IntAct"/>
</dbReference>
<dbReference type="GO" id="GO:0005436">
    <property type="term" value="F:sodium:phosphate symporter activity"/>
    <property type="evidence" value="ECO:0000314"/>
    <property type="project" value="SGD"/>
</dbReference>
<dbReference type="GO" id="GO:0035435">
    <property type="term" value="P:phosphate ion transmembrane transport"/>
    <property type="evidence" value="ECO:0000314"/>
    <property type="project" value="SGD"/>
</dbReference>
<dbReference type="GO" id="GO:0006817">
    <property type="term" value="P:phosphate ion transport"/>
    <property type="evidence" value="ECO:0000315"/>
    <property type="project" value="SGD"/>
</dbReference>
<dbReference type="GO" id="GO:0055085">
    <property type="term" value="P:transmembrane transport"/>
    <property type="evidence" value="ECO:0000315"/>
    <property type="project" value="SGD"/>
</dbReference>
<dbReference type="InterPro" id="IPR001204">
    <property type="entry name" value="Phos_transporter"/>
</dbReference>
<dbReference type="PANTHER" id="PTHR11101">
    <property type="entry name" value="PHOSPHATE TRANSPORTER"/>
    <property type="match status" value="1"/>
</dbReference>
<dbReference type="PANTHER" id="PTHR11101:SF80">
    <property type="entry name" value="PHOSPHATE TRANSPORTER"/>
    <property type="match status" value="1"/>
</dbReference>
<dbReference type="Pfam" id="PF01384">
    <property type="entry name" value="PHO4"/>
    <property type="match status" value="1"/>
</dbReference>
<proteinExistence type="evidence at protein level"/>
<gene>
    <name type="primary">PHO89</name>
    <name type="synonym">ITN1</name>
    <name type="ordered locus">YBR296C</name>
    <name type="ORF">YBR2113</name>
</gene>